<accession>B0U0X4</accession>
<organism>
    <name type="scientific">Francisella philomiragia subsp. philomiragia (strain ATCC 25017 / CCUG 19701 / FSC 153 / O#319-036)</name>
    <dbReference type="NCBI Taxonomy" id="484022"/>
    <lineage>
        <taxon>Bacteria</taxon>
        <taxon>Pseudomonadati</taxon>
        <taxon>Pseudomonadota</taxon>
        <taxon>Gammaproteobacteria</taxon>
        <taxon>Thiotrichales</taxon>
        <taxon>Francisellaceae</taxon>
        <taxon>Francisella</taxon>
    </lineage>
</organism>
<comment type="function">
    <text evidence="1">This protein binds to the 23S rRNA, and is important in its secondary structure. It is located near the subunit interface in the base of the L7/L12 stalk, and near the tRNA binding site of the peptidyltransferase center.</text>
</comment>
<comment type="subunit">
    <text evidence="1">Part of the 50S ribosomal subunit.</text>
</comment>
<comment type="similarity">
    <text evidence="1">Belongs to the universal ribosomal protein uL6 family.</text>
</comment>
<feature type="chain" id="PRO_1000087044" description="Large ribosomal subunit protein uL6">
    <location>
        <begin position="1"/>
        <end position="178"/>
    </location>
</feature>
<keyword id="KW-0687">Ribonucleoprotein</keyword>
<keyword id="KW-0689">Ribosomal protein</keyword>
<keyword id="KW-0694">RNA-binding</keyword>
<keyword id="KW-0699">rRNA-binding</keyword>
<reference key="1">
    <citation type="submission" date="2007-12" db="EMBL/GenBank/DDBJ databases">
        <title>Complete sequence of chromosome of Francisella philomiragia subsp. philomiragia ATCC 25017.</title>
        <authorList>
            <consortium name="US DOE Joint Genome Institute"/>
            <person name="Copeland A."/>
            <person name="Lucas S."/>
            <person name="Lapidus A."/>
            <person name="Barry K."/>
            <person name="Detter J.C."/>
            <person name="Glavina del Rio T."/>
            <person name="Hammon N."/>
            <person name="Israni S."/>
            <person name="Dalin E."/>
            <person name="Tice H."/>
            <person name="Pitluck S."/>
            <person name="Chain P."/>
            <person name="Malfatti S."/>
            <person name="Shin M."/>
            <person name="Vergez L."/>
            <person name="Schmutz J."/>
            <person name="Larimer F."/>
            <person name="Land M."/>
            <person name="Hauser L."/>
            <person name="Richardson P."/>
        </authorList>
    </citation>
    <scope>NUCLEOTIDE SEQUENCE [LARGE SCALE GENOMIC DNA]</scope>
    <source>
        <strain>ATCC 25017 / CCUG 19701 / FSC 153 / O#319-036</strain>
    </source>
</reference>
<name>RL6_FRAP2</name>
<protein>
    <recommendedName>
        <fullName evidence="1">Large ribosomal subunit protein uL6</fullName>
    </recommendedName>
    <alternativeName>
        <fullName evidence="2">50S ribosomal protein L6</fullName>
    </alternativeName>
</protein>
<evidence type="ECO:0000255" key="1">
    <source>
        <dbReference type="HAMAP-Rule" id="MF_01365"/>
    </source>
</evidence>
<evidence type="ECO:0000305" key="2"/>
<dbReference type="EMBL" id="CP000937">
    <property type="protein sequence ID" value="ABZ86790.1"/>
    <property type="molecule type" value="Genomic_DNA"/>
</dbReference>
<dbReference type="SMR" id="B0U0X4"/>
<dbReference type="KEGG" id="fph:Fphi_0572"/>
<dbReference type="eggNOG" id="COG0097">
    <property type="taxonomic scope" value="Bacteria"/>
</dbReference>
<dbReference type="HOGENOM" id="CLU_065464_1_2_6"/>
<dbReference type="GO" id="GO:0022625">
    <property type="term" value="C:cytosolic large ribosomal subunit"/>
    <property type="evidence" value="ECO:0007669"/>
    <property type="project" value="TreeGrafter"/>
</dbReference>
<dbReference type="GO" id="GO:0019843">
    <property type="term" value="F:rRNA binding"/>
    <property type="evidence" value="ECO:0007669"/>
    <property type="project" value="UniProtKB-UniRule"/>
</dbReference>
<dbReference type="GO" id="GO:0003735">
    <property type="term" value="F:structural constituent of ribosome"/>
    <property type="evidence" value="ECO:0007669"/>
    <property type="project" value="InterPro"/>
</dbReference>
<dbReference type="GO" id="GO:0002181">
    <property type="term" value="P:cytoplasmic translation"/>
    <property type="evidence" value="ECO:0007669"/>
    <property type="project" value="TreeGrafter"/>
</dbReference>
<dbReference type="FunFam" id="3.90.930.12:FF:000001">
    <property type="entry name" value="50S ribosomal protein L6"/>
    <property type="match status" value="1"/>
</dbReference>
<dbReference type="Gene3D" id="3.90.930.12">
    <property type="entry name" value="Ribosomal protein L6, alpha-beta domain"/>
    <property type="match status" value="2"/>
</dbReference>
<dbReference type="HAMAP" id="MF_01365_B">
    <property type="entry name" value="Ribosomal_uL6_B"/>
    <property type="match status" value="1"/>
</dbReference>
<dbReference type="InterPro" id="IPR000702">
    <property type="entry name" value="Ribosomal_uL6-like"/>
</dbReference>
<dbReference type="InterPro" id="IPR036789">
    <property type="entry name" value="Ribosomal_uL6-like_a/b-dom_sf"/>
</dbReference>
<dbReference type="InterPro" id="IPR020040">
    <property type="entry name" value="Ribosomal_uL6_a/b-dom"/>
</dbReference>
<dbReference type="InterPro" id="IPR019906">
    <property type="entry name" value="Ribosomal_uL6_bac-type"/>
</dbReference>
<dbReference type="InterPro" id="IPR002358">
    <property type="entry name" value="Ribosomal_uL6_CS"/>
</dbReference>
<dbReference type="NCBIfam" id="TIGR03654">
    <property type="entry name" value="L6_bact"/>
    <property type="match status" value="1"/>
</dbReference>
<dbReference type="PANTHER" id="PTHR11655">
    <property type="entry name" value="60S/50S RIBOSOMAL PROTEIN L6/L9"/>
    <property type="match status" value="1"/>
</dbReference>
<dbReference type="PANTHER" id="PTHR11655:SF14">
    <property type="entry name" value="LARGE RIBOSOMAL SUBUNIT PROTEIN UL6M"/>
    <property type="match status" value="1"/>
</dbReference>
<dbReference type="Pfam" id="PF00347">
    <property type="entry name" value="Ribosomal_L6"/>
    <property type="match status" value="2"/>
</dbReference>
<dbReference type="PIRSF" id="PIRSF002162">
    <property type="entry name" value="Ribosomal_L6"/>
    <property type="match status" value="1"/>
</dbReference>
<dbReference type="PRINTS" id="PR00059">
    <property type="entry name" value="RIBOSOMALL6"/>
</dbReference>
<dbReference type="SUPFAM" id="SSF56053">
    <property type="entry name" value="Ribosomal protein L6"/>
    <property type="match status" value="2"/>
</dbReference>
<dbReference type="PROSITE" id="PS00525">
    <property type="entry name" value="RIBOSOMAL_L6_1"/>
    <property type="match status" value="1"/>
</dbReference>
<sequence>MSRIGKKPVAIPSGVTINVAAGNQVEVKSTKATLNKTFSSDVTFNIEDGVVTVTPKNNSKNAIAQSGTARAILNNMVEGVSKGFERKLKIIGVGYRAKAQGSELNLTLGFSHPVVYKLPQGITAETPAPTEIILKGADKEVLGKVASEIREYRKPEPYKGKGVRYEDEYVAKKEAKKK</sequence>
<proteinExistence type="inferred from homology"/>
<gene>
    <name evidence="1" type="primary">rplF</name>
    <name type="ordered locus">Fphi_0572</name>
</gene>